<reference key="1">
    <citation type="journal article" date="2008" name="BMC Genomics">
        <title>The missing link: Bordetella petrii is endowed with both the metabolic versatility of environmental bacteria and virulence traits of pathogenic Bordetellae.</title>
        <authorList>
            <person name="Gross R."/>
            <person name="Guzman C.A."/>
            <person name="Sebaihia M."/>
            <person name="Martin dos Santos V.A.P."/>
            <person name="Pieper D.H."/>
            <person name="Koebnik R."/>
            <person name="Lechner M."/>
            <person name="Bartels D."/>
            <person name="Buhrmester J."/>
            <person name="Choudhuri J.V."/>
            <person name="Ebensen T."/>
            <person name="Gaigalat L."/>
            <person name="Herrmann S."/>
            <person name="Khachane A.N."/>
            <person name="Larisch C."/>
            <person name="Link S."/>
            <person name="Linke B."/>
            <person name="Meyer F."/>
            <person name="Mormann S."/>
            <person name="Nakunst D."/>
            <person name="Rueckert C."/>
            <person name="Schneiker-Bekel S."/>
            <person name="Schulze K."/>
            <person name="Voerholter F.-J."/>
            <person name="Yevsa T."/>
            <person name="Engle J.T."/>
            <person name="Goldman W.E."/>
            <person name="Puehler A."/>
            <person name="Goebel U.B."/>
            <person name="Goesmann A."/>
            <person name="Bloecker H."/>
            <person name="Kaiser O."/>
            <person name="Martinez-Arias R."/>
        </authorList>
    </citation>
    <scope>NUCLEOTIDE SEQUENCE [LARGE SCALE GENOMIC DNA]</scope>
    <source>
        <strain>ATCC BAA-461 / DSM 12804 / CCUG 43448</strain>
    </source>
</reference>
<dbReference type="EC" id="7.1.1.-" evidence="1"/>
<dbReference type="EMBL" id="AM902716">
    <property type="protein sequence ID" value="CAP42026.1"/>
    <property type="molecule type" value="Genomic_DNA"/>
</dbReference>
<dbReference type="SMR" id="A9II25"/>
<dbReference type="STRING" id="94624.Bpet1687"/>
<dbReference type="KEGG" id="bpt:Bpet1687"/>
<dbReference type="eggNOG" id="COG0713">
    <property type="taxonomic scope" value="Bacteria"/>
</dbReference>
<dbReference type="Proteomes" id="UP000001225">
    <property type="component" value="Chromosome"/>
</dbReference>
<dbReference type="GO" id="GO:0030964">
    <property type="term" value="C:NADH dehydrogenase complex"/>
    <property type="evidence" value="ECO:0007669"/>
    <property type="project" value="TreeGrafter"/>
</dbReference>
<dbReference type="GO" id="GO:0005886">
    <property type="term" value="C:plasma membrane"/>
    <property type="evidence" value="ECO:0007669"/>
    <property type="project" value="UniProtKB-SubCell"/>
</dbReference>
<dbReference type="GO" id="GO:0050136">
    <property type="term" value="F:NADH:ubiquinone reductase (non-electrogenic) activity"/>
    <property type="evidence" value="ECO:0007669"/>
    <property type="project" value="UniProtKB-UniRule"/>
</dbReference>
<dbReference type="GO" id="GO:0048038">
    <property type="term" value="F:quinone binding"/>
    <property type="evidence" value="ECO:0007669"/>
    <property type="project" value="UniProtKB-KW"/>
</dbReference>
<dbReference type="GO" id="GO:0042773">
    <property type="term" value="P:ATP synthesis coupled electron transport"/>
    <property type="evidence" value="ECO:0007669"/>
    <property type="project" value="InterPro"/>
</dbReference>
<dbReference type="FunFam" id="1.10.287.3510:FF:000001">
    <property type="entry name" value="NADH-quinone oxidoreductase subunit K"/>
    <property type="match status" value="1"/>
</dbReference>
<dbReference type="Gene3D" id="1.10.287.3510">
    <property type="match status" value="1"/>
</dbReference>
<dbReference type="HAMAP" id="MF_01456">
    <property type="entry name" value="NDH1_NuoK"/>
    <property type="match status" value="1"/>
</dbReference>
<dbReference type="InterPro" id="IPR001133">
    <property type="entry name" value="NADH_UbQ_OxRdtase_chain4L/K"/>
</dbReference>
<dbReference type="InterPro" id="IPR039428">
    <property type="entry name" value="NUOK/Mnh_C1-like"/>
</dbReference>
<dbReference type="NCBIfam" id="NF004320">
    <property type="entry name" value="PRK05715.1-2"/>
    <property type="match status" value="1"/>
</dbReference>
<dbReference type="NCBIfam" id="NF004321">
    <property type="entry name" value="PRK05715.1-3"/>
    <property type="match status" value="1"/>
</dbReference>
<dbReference type="NCBIfam" id="NF004323">
    <property type="entry name" value="PRK05715.1-5"/>
    <property type="match status" value="1"/>
</dbReference>
<dbReference type="PANTHER" id="PTHR11434:SF21">
    <property type="entry name" value="NADH DEHYDROGENASE SUBUNIT 4L-RELATED"/>
    <property type="match status" value="1"/>
</dbReference>
<dbReference type="PANTHER" id="PTHR11434">
    <property type="entry name" value="NADH-UBIQUINONE OXIDOREDUCTASE SUBUNIT ND4L"/>
    <property type="match status" value="1"/>
</dbReference>
<dbReference type="Pfam" id="PF00420">
    <property type="entry name" value="Oxidored_q2"/>
    <property type="match status" value="1"/>
</dbReference>
<organism>
    <name type="scientific">Bordetella petrii (strain ATCC BAA-461 / DSM 12804 / CCUG 43448)</name>
    <dbReference type="NCBI Taxonomy" id="340100"/>
    <lineage>
        <taxon>Bacteria</taxon>
        <taxon>Pseudomonadati</taxon>
        <taxon>Pseudomonadota</taxon>
        <taxon>Betaproteobacteria</taxon>
        <taxon>Burkholderiales</taxon>
        <taxon>Alcaligenaceae</taxon>
        <taxon>Bordetella</taxon>
    </lineage>
</organism>
<feature type="chain" id="PRO_0000389966" description="NADH-quinone oxidoreductase subunit K">
    <location>
        <begin position="1"/>
        <end position="102"/>
    </location>
</feature>
<feature type="transmembrane region" description="Helical" evidence="1">
    <location>
        <begin position="5"/>
        <end position="25"/>
    </location>
</feature>
<feature type="transmembrane region" description="Helical" evidence="1">
    <location>
        <begin position="31"/>
        <end position="51"/>
    </location>
</feature>
<feature type="transmembrane region" description="Helical" evidence="1">
    <location>
        <begin position="62"/>
        <end position="82"/>
    </location>
</feature>
<evidence type="ECO:0000255" key="1">
    <source>
        <dbReference type="HAMAP-Rule" id="MF_01456"/>
    </source>
</evidence>
<keyword id="KW-0997">Cell inner membrane</keyword>
<keyword id="KW-1003">Cell membrane</keyword>
<keyword id="KW-0472">Membrane</keyword>
<keyword id="KW-0520">NAD</keyword>
<keyword id="KW-0874">Quinone</keyword>
<keyword id="KW-1278">Translocase</keyword>
<keyword id="KW-0812">Transmembrane</keyword>
<keyword id="KW-1133">Transmembrane helix</keyword>
<keyword id="KW-0813">Transport</keyword>
<keyword id="KW-0830">Ubiquinone</keyword>
<accession>A9II25</accession>
<sequence>MTLTLAHYLVLGAILFAIGIFGIFLNRRNLIILLMSIELVLLAVNMNFVAFSSWFGDTAGQVFVFFILTVAAAEAAIGLAILVLLFRNLNTINVDELDRLKG</sequence>
<comment type="function">
    <text evidence="1">NDH-1 shuttles electrons from NADH, via FMN and iron-sulfur (Fe-S) centers, to quinones in the respiratory chain. The immediate electron acceptor for the enzyme in this species is believed to be ubiquinone. Couples the redox reaction to proton translocation (for every two electrons transferred, four hydrogen ions are translocated across the cytoplasmic membrane), and thus conserves the redox energy in a proton gradient.</text>
</comment>
<comment type="catalytic activity">
    <reaction evidence="1">
        <text>a quinone + NADH + 5 H(+)(in) = a quinol + NAD(+) + 4 H(+)(out)</text>
        <dbReference type="Rhea" id="RHEA:57888"/>
        <dbReference type="ChEBI" id="CHEBI:15378"/>
        <dbReference type="ChEBI" id="CHEBI:24646"/>
        <dbReference type="ChEBI" id="CHEBI:57540"/>
        <dbReference type="ChEBI" id="CHEBI:57945"/>
        <dbReference type="ChEBI" id="CHEBI:132124"/>
    </reaction>
</comment>
<comment type="subunit">
    <text evidence="1">NDH-1 is composed of 14 different subunits. Subunits NuoA, H, J, K, L, M, N constitute the membrane sector of the complex.</text>
</comment>
<comment type="subcellular location">
    <subcellularLocation>
        <location evidence="1">Cell inner membrane</location>
        <topology evidence="1">Multi-pass membrane protein</topology>
    </subcellularLocation>
</comment>
<comment type="similarity">
    <text evidence="1">Belongs to the complex I subunit 4L family.</text>
</comment>
<proteinExistence type="inferred from homology"/>
<gene>
    <name evidence="1" type="primary">nuoK</name>
    <name type="ordered locus">Bpet1687</name>
</gene>
<protein>
    <recommendedName>
        <fullName evidence="1">NADH-quinone oxidoreductase subunit K</fullName>
        <ecNumber evidence="1">7.1.1.-</ecNumber>
    </recommendedName>
    <alternativeName>
        <fullName evidence="1">NADH dehydrogenase I subunit K</fullName>
    </alternativeName>
    <alternativeName>
        <fullName evidence="1">NDH-1 subunit K</fullName>
    </alternativeName>
</protein>
<name>NUOK_BORPD</name>